<comment type="function">
    <text evidence="4 9 10 11 12">Confers resistance to zinc, cadmium and lead (PubMed:10660539, PubMed:17326661, PubMed:9364914, PubMed:9405611, PubMed:9830000). Couples the hydrolysis of ATP with the export of zinc, cadmium or lead, with highest activity when the metals are present as metal-thiolate complexes (PubMed:10660539, PubMed:17326661, PubMed:9405611). Can also bind nickel, copper, cobalt and mercury (PubMed:10660539, PubMed:17326661).</text>
</comment>
<comment type="catalytic activity">
    <reaction evidence="4 9">
        <text>Pb(2+)(in) + ATP + H2O = Pb(2+)(out) + ADP + phosphate + H(+)</text>
        <dbReference type="Rhea" id="RHEA:52580"/>
        <dbReference type="ChEBI" id="CHEBI:15377"/>
        <dbReference type="ChEBI" id="CHEBI:15378"/>
        <dbReference type="ChEBI" id="CHEBI:30616"/>
        <dbReference type="ChEBI" id="CHEBI:43474"/>
        <dbReference type="ChEBI" id="CHEBI:49807"/>
        <dbReference type="ChEBI" id="CHEBI:456216"/>
    </reaction>
</comment>
<comment type="catalytic activity">
    <reaction evidence="4 9 11">
        <text>Zn(2+)(in) + ATP + H2O = Zn(2+)(out) + ADP + phosphate + H(+)</text>
        <dbReference type="Rhea" id="RHEA:20621"/>
        <dbReference type="ChEBI" id="CHEBI:15377"/>
        <dbReference type="ChEBI" id="CHEBI:15378"/>
        <dbReference type="ChEBI" id="CHEBI:29105"/>
        <dbReference type="ChEBI" id="CHEBI:30616"/>
        <dbReference type="ChEBI" id="CHEBI:43474"/>
        <dbReference type="ChEBI" id="CHEBI:456216"/>
        <dbReference type="EC" id="7.2.2.12"/>
    </reaction>
</comment>
<comment type="catalytic activity">
    <reaction evidence="4 9 11">
        <text>Cd(2+)(in) + ATP + H2O = Cd(2+)(out) + ADP + phosphate + H(+)</text>
        <dbReference type="Rhea" id="RHEA:12132"/>
        <dbReference type="ChEBI" id="CHEBI:15377"/>
        <dbReference type="ChEBI" id="CHEBI:15378"/>
        <dbReference type="ChEBI" id="CHEBI:30616"/>
        <dbReference type="ChEBI" id="CHEBI:43474"/>
        <dbReference type="ChEBI" id="CHEBI:48775"/>
        <dbReference type="ChEBI" id="CHEBI:456216"/>
        <dbReference type="EC" id="7.2.2.21"/>
    </reaction>
</comment>
<comment type="activity regulation">
    <text evidence="11">Inhibited by orthovanadate.</text>
</comment>
<comment type="biophysicochemical properties">
    <kinetics>
        <KM evidence="4">6.9 uM for Pb(2+) (at 37 degrees Celsius and pH 7.0)</KM>
        <KM evidence="9">6.1 uM for Pb(2+) (at 37 degrees Celsius and pH 7.0)</KM>
        <KM evidence="4">118 uM for Pb(2+)-thiolate (at 37 degrees Celsius and pH 7.0)</KM>
        <KM evidence="9">150 uM for Pb(2+)-thiolate (at 37 degrees Celsius and pH 7.0)</KM>
        <KM evidence="4 9">5.1 uM for Zn(2+) (at 37 degrees Celsius and pH 7.0)</KM>
        <KM evidence="4">109 uM for Zn(2+)-thiolate (at 37 degrees Celsius and pH 7.0)</KM>
        <KM evidence="9">105 uM for Zn(2+)-thiolate (at 37 degrees Celsius and pH 7.0)</KM>
        <KM evidence="9">3.1 uM for Cd(2+) (at 37 degrees Celsius and pH 7.0)</KM>
        <KM evidence="4">115 uM for Cd(2+)-thiolate (at 37 degrees Celsius and pH 7.0)</KM>
        <KM evidence="9">123 uM for Cd(2+)-thiolate (at 37 degrees Celsius and pH 7.0)</KM>
        <KM evidence="9">3.4 uM for Cu(2+) (at 37 degrees Celsius and pH 7.0)</KM>
        <KM evidence="9">85 uM for Cu(2+)-thiolate (at 37 degrees Celsius and pH 7.0)</KM>
        <KM evidence="9">2.1 uM for Ni(2+) (at 37 degrees Celsius and pH 7.0)</KM>
        <KM evidence="9">169 uM for Ni(2+)-thiolate (at 37 degrees Celsius and pH 7.0)</KM>
        <KM evidence="9">4 uM for Co(2+) (at 37 degrees Celsius and pH 7.0)</KM>
        <KM evidence="9">75 uM for Co(2+)-thiolate (at 37 degrees Celsius and pH 7.0)</KM>
        <Vmax evidence="4">0.88 umol/min/mg enzyme with Pb(2+) as substrate (at 37 degrees Celsius and pH 7.0)</Vmax>
        <Vmax evidence="9">0.638 umol/min/mg enzyme with Pb(2+) as substrate (at 37 degrees Celsius and pH 7.0)</Vmax>
        <Vmax evidence="4">3.02 umol/min/mg enzyme with Pb(2+)-thiolate as substrate (at 37 degrees Celsius and pH 7.0)</Vmax>
        <Vmax evidence="9">2.497 umol/min/mg enzyme with Pb(2+)-thiolate as substrate (at 37 degrees Celsius and pH 7.0)</Vmax>
        <Vmax evidence="4">0.19 umol/min/mg enzyme with Zn(2+) as substrate (at 37 degrees Celsius and pH 7.0)</Vmax>
        <Vmax evidence="9">0.21 umol/min/mg enzyme with Zn(2+) as substrate (at 37 degrees Celsius and pH 7.0)</Vmax>
        <Vmax evidence="4">0.96 umol/min/mg enzyme with Zn(2+)-thiolate as substrate (at 37 degrees Celsius and pH 7.0)</Vmax>
        <Vmax evidence="9">0.932 umol/min/mg enzyme with Zn(2+)-thiolate as substrate (at 37 degrees Celsius and pH 7.0)</Vmax>
        <Vmax evidence="9">0.102 umol/min/mg enzyme with Cd(2+) as substrate (at 37 degrees Celsius and pH 7.0)</Vmax>
        <Vmax evidence="4">1.16 umol/min/mg enzyme with Cd(2+)-thiolate as substrate (at 37 degrees Celsius and pH 7.0)</Vmax>
        <Vmax evidence="9">0.862 umol/min/mg enzyme with Cd(2+)-thiolate as substrate (at 37 degrees Celsius and pH 7.0)</Vmax>
        <Vmax evidence="9">0.085 umol/min/mg enzyme with Cu(2+) as substrate (at 37 degrees Celsius and pH 7.0)</Vmax>
        <Vmax evidence="9">0.104 umol/min/mg enzyme with Cu(2+)-thiolate as substrate (at 37 degrees Celsius and pH 7.0)</Vmax>
        <Vmax evidence="9">0.076 umol/min/mg enzyme with Ni(2+) as substrate (at 37 degrees Celsius and pH 7.0)</Vmax>
        <Vmax evidence="9">0.138 umol/min/mg enzyme with Ni(2+)-thiolate as substrate (at 37 degrees Celsius and pH 7.0)</Vmax>
        <Vmax evidence="9">0.036 umol/min/mg enzyme with Co(2+) as substrate (at 37 degrees Celsius and pH 7.0)</Vmax>
        <Vmax evidence="9">0.103 umol/min/mg enzyme with Co(2+)-thiolate as substrate (at 37 degrees Celsius and pH 7.0)</Vmax>
    </kinetics>
</comment>
<comment type="subcellular location">
    <subcellularLocation>
        <location evidence="4 6 7 8">Cell inner membrane</location>
        <topology evidence="2">Multi-pass membrane protein</topology>
    </subcellularLocation>
</comment>
<comment type="induction">
    <text evidence="11">Induced by zinc.</text>
</comment>
<comment type="domain">
    <text evidence="7 8 9">Has two high-affinity metal-binding sites, one in the N-terminal region and another in the transmembrane region. Both sites are able to access and bind metal ion independently of each other. The N-terminal metal-binding site is not strictly necessary for activity and metal selectivity, but is needed for maximal activity and may be involved in regulation. The metal-binding site in the transmembrane region is essential for activity of the pump.</text>
</comment>
<comment type="disruption phenotype">
    <text evidence="10 11 12">Mutant exhibits hypersensitivity to zinc, cadmium, lead and, to a lesser extent, cobalt and nickel.</text>
</comment>
<comment type="similarity">
    <text evidence="16">Belongs to the cation transport ATPase (P-type) (TC 3.A.3) family. Type IB subfamily.</text>
</comment>
<keyword id="KW-0002">3D-structure</keyword>
<keyword id="KW-0067">ATP-binding</keyword>
<keyword id="KW-0104">Cadmium</keyword>
<keyword id="KW-0997">Cell inner membrane</keyword>
<keyword id="KW-1003">Cell membrane</keyword>
<keyword id="KW-0406">Ion transport</keyword>
<keyword id="KW-1027">Lead</keyword>
<keyword id="KW-0460">Magnesium</keyword>
<keyword id="KW-0472">Membrane</keyword>
<keyword id="KW-0479">Metal-binding</keyword>
<keyword id="KW-0547">Nucleotide-binding</keyword>
<keyword id="KW-0597">Phosphoprotein</keyword>
<keyword id="KW-1185">Reference proteome</keyword>
<keyword id="KW-1278">Translocase</keyword>
<keyword id="KW-0812">Transmembrane</keyword>
<keyword id="KW-1133">Transmembrane helix</keyword>
<keyword id="KW-0813">Transport</keyword>
<keyword id="KW-0862">Zinc</keyword>
<keyword id="KW-0864">Zinc transport</keyword>
<proteinExistence type="evidence at protein level"/>
<feature type="chain" id="PRO_0000046332" description="Zinc/cadmium/lead-transporting P-type ATPase">
    <location>
        <begin position="1"/>
        <end position="732"/>
    </location>
</feature>
<feature type="topological domain" description="Cytoplasmic" evidence="16">
    <location>
        <begin position="1"/>
        <end position="124"/>
    </location>
</feature>
<feature type="transmembrane region" description="Helical" evidence="2">
    <location>
        <begin position="125"/>
        <end position="145"/>
    </location>
</feature>
<feature type="topological domain" description="Periplasmic" evidence="16">
    <location>
        <position position="146"/>
    </location>
</feature>
<feature type="transmembrane region" description="Helical" evidence="2">
    <location>
        <begin position="147"/>
        <end position="167"/>
    </location>
</feature>
<feature type="topological domain" description="Cytoplasmic" evidence="16">
    <location>
        <begin position="168"/>
        <end position="179"/>
    </location>
</feature>
<feature type="transmembrane region" description="Helical" evidence="2">
    <location>
        <begin position="180"/>
        <end position="197"/>
    </location>
</feature>
<feature type="topological domain" description="Periplasmic" evidence="16">
    <location>
        <begin position="198"/>
        <end position="202"/>
    </location>
</feature>
<feature type="transmembrane region" description="Helical" evidence="2">
    <location>
        <begin position="203"/>
        <end position="222"/>
    </location>
</feature>
<feature type="topological domain" description="Cytoplasmic" evidence="16">
    <location>
        <begin position="223"/>
        <end position="356"/>
    </location>
</feature>
<feature type="transmembrane region" description="Helical" evidence="2">
    <location>
        <begin position="357"/>
        <end position="377"/>
    </location>
</feature>
<feature type="topological domain" description="Periplasmic" evidence="16">
    <location>
        <begin position="378"/>
        <end position="383"/>
    </location>
</feature>
<feature type="transmembrane region" description="Helical" evidence="2">
    <location>
        <begin position="384"/>
        <end position="404"/>
    </location>
</feature>
<feature type="topological domain" description="Cytoplasmic" evidence="16">
    <location>
        <begin position="405"/>
        <end position="685"/>
    </location>
</feature>
<feature type="transmembrane region" description="Helical" evidence="2">
    <location>
        <begin position="686"/>
        <end position="702"/>
    </location>
</feature>
<feature type="topological domain" description="Periplasmic" evidence="16">
    <location>
        <begin position="703"/>
        <end position="707"/>
    </location>
</feature>
<feature type="transmembrane region" description="Helical" evidence="2">
    <location>
        <begin position="708"/>
        <end position="729"/>
    </location>
</feature>
<feature type="topological domain" description="Cytoplasmic" evidence="6">
    <location>
        <begin position="730"/>
        <end position="732"/>
    </location>
</feature>
<feature type="domain" description="HMA" evidence="3">
    <location>
        <begin position="48"/>
        <end position="112"/>
    </location>
</feature>
<feature type="active site" description="4-aspartylphosphate intermediate" evidence="1">
    <location>
        <position position="436"/>
    </location>
</feature>
<feature type="binding site" evidence="5">
    <location>
        <position position="58"/>
    </location>
    <ligand>
        <name>Zn(2+)</name>
        <dbReference type="ChEBI" id="CHEBI:29105"/>
        <label>1</label>
    </ligand>
</feature>
<feature type="binding site" evidence="3 5 17 18">
    <location>
        <position position="59"/>
    </location>
    <ligand>
        <name>Zn(2+)</name>
        <dbReference type="ChEBI" id="CHEBI:29105"/>
        <label>1</label>
    </ligand>
</feature>
<feature type="binding site" evidence="3 5 17 18">
    <location>
        <position position="62"/>
    </location>
    <ligand>
        <name>Zn(2+)</name>
        <dbReference type="ChEBI" id="CHEBI:29105"/>
        <label>1</label>
    </ligand>
</feature>
<feature type="binding site" evidence="17 18 19 20">
    <location>
        <position position="392"/>
    </location>
    <ligand>
        <name>Zn(2+)</name>
        <dbReference type="ChEBI" id="CHEBI:29105"/>
        <label>2</label>
    </ligand>
</feature>
<feature type="binding site" evidence="17 18 19 20">
    <location>
        <position position="394"/>
    </location>
    <ligand>
        <name>Zn(2+)</name>
        <dbReference type="ChEBI" id="CHEBI:29105"/>
        <label>2</label>
    </ligand>
</feature>
<feature type="binding site" evidence="1">
    <location>
        <position position="436"/>
    </location>
    <ligand>
        <name>Mg(2+)</name>
        <dbReference type="ChEBI" id="CHEBI:18420"/>
    </ligand>
</feature>
<feature type="binding site" evidence="1">
    <location>
        <position position="438"/>
    </location>
    <ligand>
        <name>Mg(2+)</name>
        <dbReference type="ChEBI" id="CHEBI:18420"/>
    </ligand>
</feature>
<feature type="binding site" evidence="1">
    <location>
        <position position="628"/>
    </location>
    <ligand>
        <name>Mg(2+)</name>
        <dbReference type="ChEBI" id="CHEBI:18420"/>
    </ligand>
</feature>
<feature type="binding site" evidence="18 20">
    <location>
        <position position="714"/>
    </location>
    <ligand>
        <name>Zn(2+)</name>
        <dbReference type="ChEBI" id="CHEBI:29105"/>
        <label>2</label>
    </ligand>
</feature>
<feature type="site" description="Important for metal transport" evidence="1 18 20">
    <location>
        <position position="693"/>
    </location>
</feature>
<feature type="mutagenesis site" description="2-3-fold decrease in ATPase activity. Binds metal ion only at the transmembrane site." evidence="7">
    <original>CAAC</original>
    <variation>AAAA</variation>
    <location>
        <begin position="59"/>
        <end position="62"/>
    </location>
</feature>
<feature type="mutagenesis site" description="Reduces the ATPase activity by 50%. Reduces level of phosphorylation." evidence="8">
    <original>CAAC</original>
    <variation>SAAS</variation>
    <location>
        <begin position="59"/>
        <end position="62"/>
    </location>
</feature>
<feature type="mutagenesis site" description="Lack of ATPase activity. Binds metal ion only at the N-terminal site." evidence="7">
    <original>CPC</original>
    <variation>APA</variation>
    <location>
        <begin position="392"/>
        <end position="394"/>
    </location>
</feature>
<feature type="mutagenesis site" description="Lack of ATPase activity. Loss of zinc-stimulated phosphorylation." evidence="8">
    <original>CPC</original>
    <variation>SPS</variation>
    <location>
        <begin position="392"/>
        <end position="394"/>
    </location>
</feature>
<feature type="mutagenesis site" description="Lack of activity. Cannot bind metal at the transmembrane site. Lack of phosphorylation with ATP." evidence="9">
    <original>C</original>
    <variation>A</variation>
    <location>
        <position position="392"/>
    </location>
</feature>
<feature type="mutagenesis site" description="Decrease in activity. Binds Zn(2+), Cd(2+), Ni(2+), Co(2+) and Cu(2+), but not Pb(2+)." evidence="9">
    <original>C</original>
    <variation>H</variation>
    <variation>S</variation>
    <location>
        <position position="392"/>
    </location>
</feature>
<feature type="mutagenesis site" description="Lack of activity with any metal. Cannot bind metal at the transmembrane site. Lack of phosphorylation with ATP." evidence="9">
    <original>P</original>
    <variation>A</variation>
    <location>
        <position position="393"/>
    </location>
</feature>
<feature type="mutagenesis site" description="Lack of activity. Cannot bind metal at the transmembrane site. Lack of phosphorylation with ATP." evidence="9">
    <original>C</original>
    <variation>A</variation>
    <location>
        <position position="394"/>
    </location>
</feature>
<feature type="mutagenesis site" description="Decrease in activity. Binds Zn(2+), Cd(2+), Ni(2+), Co(2+) and Cu(2+), but not Pb(2+)." evidence="9">
    <original>C</original>
    <variation>H</variation>
    <variation>S</variation>
    <location>
        <position position="394"/>
    </location>
</feature>
<feature type="mutagenesis site" description="Loss of zinc-stimulated ATPase activity. Poorly phosphorylated with ATP." evidence="8">
    <original>K</original>
    <variation>N</variation>
    <location>
        <position position="693"/>
    </location>
</feature>
<feature type="mutagenesis site" description="Shows high metal-independent ATPase activity. Poorly phosphorylated with ATP." evidence="8">
    <original>D</original>
    <variation>M</variation>
    <location>
        <position position="714"/>
    </location>
</feature>
<feature type="strand" evidence="23">
    <location>
        <begin position="48"/>
        <end position="56"/>
    </location>
</feature>
<feature type="helix" evidence="23">
    <location>
        <begin position="62"/>
        <end position="71"/>
    </location>
</feature>
<feature type="strand" evidence="23">
    <location>
        <begin position="73"/>
        <end position="82"/>
    </location>
</feature>
<feature type="turn" evidence="23">
    <location>
        <begin position="83"/>
        <end position="86"/>
    </location>
</feature>
<feature type="strand" evidence="23">
    <location>
        <begin position="87"/>
        <end position="94"/>
    </location>
</feature>
<feature type="helix" evidence="23">
    <location>
        <begin position="97"/>
        <end position="107"/>
    </location>
</feature>
<feature type="strand" evidence="23">
    <location>
        <begin position="110"/>
        <end position="113"/>
    </location>
</feature>
<dbReference type="EC" id="7.2.2.-" evidence="4 9"/>
<dbReference type="EC" id="7.2.2.12" evidence="4 9 11"/>
<dbReference type="EC" id="7.2.2.21" evidence="4 9 11"/>
<dbReference type="EMBL" id="U00039">
    <property type="protein sequence ID" value="AAB18444.1"/>
    <property type="molecule type" value="Genomic_DNA"/>
</dbReference>
<dbReference type="EMBL" id="U00096">
    <property type="protein sequence ID" value="AAC76494.1"/>
    <property type="molecule type" value="Genomic_DNA"/>
</dbReference>
<dbReference type="EMBL" id="AP009048">
    <property type="protein sequence ID" value="BAE77824.1"/>
    <property type="molecule type" value="Genomic_DNA"/>
</dbReference>
<dbReference type="PIR" id="S47688">
    <property type="entry name" value="S47688"/>
</dbReference>
<dbReference type="RefSeq" id="NP_417926.1">
    <property type="nucleotide sequence ID" value="NC_000913.3"/>
</dbReference>
<dbReference type="RefSeq" id="WP_000106551.1">
    <property type="nucleotide sequence ID" value="NZ_SSZK01000008.1"/>
</dbReference>
<dbReference type="PDB" id="1MWY">
    <property type="method" value="NMR"/>
    <property type="chains" value="A=46-118"/>
</dbReference>
<dbReference type="PDB" id="1MWZ">
    <property type="method" value="NMR"/>
    <property type="chains" value="A=46-118"/>
</dbReference>
<dbReference type="PDBsum" id="1MWY"/>
<dbReference type="PDBsum" id="1MWZ"/>
<dbReference type="BMRB" id="P37617"/>
<dbReference type="SMR" id="P37617"/>
<dbReference type="BioGRID" id="4262921">
    <property type="interactions" value="36"/>
</dbReference>
<dbReference type="DIP" id="DIP-12947N"/>
<dbReference type="FunCoup" id="P37617">
    <property type="interactions" value="215"/>
</dbReference>
<dbReference type="IntAct" id="P37617">
    <property type="interactions" value="8"/>
</dbReference>
<dbReference type="STRING" id="511145.b3469"/>
<dbReference type="TCDB" id="3.A.3.6.2">
    <property type="family name" value="the p-type atpase (p-atpase) superfamily"/>
</dbReference>
<dbReference type="jPOST" id="P37617"/>
<dbReference type="PaxDb" id="511145-b3469"/>
<dbReference type="EnsemblBacteria" id="AAC76494">
    <property type="protein sequence ID" value="AAC76494"/>
    <property type="gene ID" value="b3469"/>
</dbReference>
<dbReference type="GeneID" id="947972"/>
<dbReference type="KEGG" id="ecj:JW3434"/>
<dbReference type="KEGG" id="eco:b3469"/>
<dbReference type="KEGG" id="ecoc:C3026_18790"/>
<dbReference type="PATRIC" id="fig|1411691.4.peg.3256"/>
<dbReference type="EchoBASE" id="EB2129"/>
<dbReference type="eggNOG" id="COG2217">
    <property type="taxonomic scope" value="Bacteria"/>
</dbReference>
<dbReference type="HOGENOM" id="CLU_001771_6_4_6"/>
<dbReference type="InParanoid" id="P37617"/>
<dbReference type="OMA" id="HLHLMET"/>
<dbReference type="OrthoDB" id="9814270at2"/>
<dbReference type="PhylomeDB" id="P37617"/>
<dbReference type="BioCyc" id="EcoCyc:YHHO-MONOMER"/>
<dbReference type="BioCyc" id="MetaCyc:YHHO-MONOMER"/>
<dbReference type="SABIO-RK" id="P37617"/>
<dbReference type="EvolutionaryTrace" id="P37617"/>
<dbReference type="PRO" id="PR:P37617"/>
<dbReference type="Proteomes" id="UP000000625">
    <property type="component" value="Chromosome"/>
</dbReference>
<dbReference type="GO" id="GO:0016020">
    <property type="term" value="C:membrane"/>
    <property type="evidence" value="ECO:0000318"/>
    <property type="project" value="GO_Central"/>
</dbReference>
<dbReference type="GO" id="GO:0005886">
    <property type="term" value="C:plasma membrane"/>
    <property type="evidence" value="ECO:0000314"/>
    <property type="project" value="EcoCyc"/>
</dbReference>
<dbReference type="GO" id="GO:0005524">
    <property type="term" value="F:ATP binding"/>
    <property type="evidence" value="ECO:0007669"/>
    <property type="project" value="UniProtKB-KW"/>
</dbReference>
<dbReference type="GO" id="GO:0016887">
    <property type="term" value="F:ATP hydrolysis activity"/>
    <property type="evidence" value="ECO:0000247"/>
    <property type="project" value="EcoliWiki"/>
</dbReference>
<dbReference type="GO" id="GO:0015086">
    <property type="term" value="F:cadmium ion transmembrane transporter activity"/>
    <property type="evidence" value="ECO:0000318"/>
    <property type="project" value="GO_Central"/>
</dbReference>
<dbReference type="GO" id="GO:0015094">
    <property type="term" value="F:lead ion transmembrane transporter activity"/>
    <property type="evidence" value="ECO:0000315"/>
    <property type="project" value="EcoCyc"/>
</dbReference>
<dbReference type="GO" id="GO:0046872">
    <property type="term" value="F:metal ion binding"/>
    <property type="evidence" value="ECO:0007669"/>
    <property type="project" value="UniProtKB-KW"/>
</dbReference>
<dbReference type="GO" id="GO:0008551">
    <property type="term" value="F:P-type cadmium transporter activity"/>
    <property type="evidence" value="ECO:0000314"/>
    <property type="project" value="EcoCyc"/>
</dbReference>
<dbReference type="GO" id="GO:0016463">
    <property type="term" value="F:P-type zinc transporter activity"/>
    <property type="evidence" value="ECO:0000314"/>
    <property type="project" value="EcoCyc"/>
</dbReference>
<dbReference type="GO" id="GO:0070574">
    <property type="term" value="P:cadmium ion transmembrane transport"/>
    <property type="evidence" value="ECO:0000314"/>
    <property type="project" value="EcoCyc"/>
</dbReference>
<dbReference type="GO" id="GO:0010312">
    <property type="term" value="P:detoxification of zinc ion"/>
    <property type="evidence" value="ECO:0000315"/>
    <property type="project" value="EcoliWiki"/>
</dbReference>
<dbReference type="GO" id="GO:0006882">
    <property type="term" value="P:intracellular zinc ion homeostasis"/>
    <property type="evidence" value="ECO:0000305"/>
    <property type="project" value="EcoCyc"/>
</dbReference>
<dbReference type="GO" id="GO:0015692">
    <property type="term" value="P:lead ion transport"/>
    <property type="evidence" value="ECO:0000315"/>
    <property type="project" value="EcoCyc"/>
</dbReference>
<dbReference type="GO" id="GO:0030001">
    <property type="term" value="P:metal ion transport"/>
    <property type="evidence" value="ECO:0000318"/>
    <property type="project" value="GO_Central"/>
</dbReference>
<dbReference type="GO" id="GO:0046686">
    <property type="term" value="P:response to cadmium ion"/>
    <property type="evidence" value="ECO:0000315"/>
    <property type="project" value="EcoCyc"/>
</dbReference>
<dbReference type="GO" id="GO:0010288">
    <property type="term" value="P:response to lead ion"/>
    <property type="evidence" value="ECO:0000270"/>
    <property type="project" value="EcoCyc"/>
</dbReference>
<dbReference type="GO" id="GO:0010043">
    <property type="term" value="P:response to zinc ion"/>
    <property type="evidence" value="ECO:0000315"/>
    <property type="project" value="EcoCyc"/>
</dbReference>
<dbReference type="GO" id="GO:0055085">
    <property type="term" value="P:transmembrane transport"/>
    <property type="evidence" value="ECO:0000318"/>
    <property type="project" value="GO_Central"/>
</dbReference>
<dbReference type="GO" id="GO:0071577">
    <property type="term" value="P:zinc ion transmembrane transport"/>
    <property type="evidence" value="ECO:0000314"/>
    <property type="project" value="EcoCyc"/>
</dbReference>
<dbReference type="GO" id="GO:0006829">
    <property type="term" value="P:zinc ion transport"/>
    <property type="evidence" value="ECO:0000315"/>
    <property type="project" value="EcoliWiki"/>
</dbReference>
<dbReference type="CDD" id="cd00371">
    <property type="entry name" value="HMA"/>
    <property type="match status" value="1"/>
</dbReference>
<dbReference type="CDD" id="cd07546">
    <property type="entry name" value="P-type_ATPase_Pb_Zn_Cd2-like"/>
    <property type="match status" value="1"/>
</dbReference>
<dbReference type="FunFam" id="2.70.150.10:FF:000039">
    <property type="entry name" value="Cadmium-translocating P-type ATPase"/>
    <property type="match status" value="1"/>
</dbReference>
<dbReference type="FunFam" id="3.30.70.100:FF:000029">
    <property type="entry name" value="Zinc/cadmium/lead-transporting P-type ATPase"/>
    <property type="match status" value="1"/>
</dbReference>
<dbReference type="FunFam" id="3.40.1110.10:FF:000034">
    <property type="entry name" value="Zinc/cadmium/lead-transporting P-type ATPase"/>
    <property type="match status" value="1"/>
</dbReference>
<dbReference type="Gene3D" id="3.30.70.100">
    <property type="match status" value="1"/>
</dbReference>
<dbReference type="Gene3D" id="3.40.1110.10">
    <property type="entry name" value="Calcium-transporting ATPase, cytoplasmic domain N"/>
    <property type="match status" value="1"/>
</dbReference>
<dbReference type="Gene3D" id="2.70.150.10">
    <property type="entry name" value="Calcium-transporting ATPase, cytoplasmic transduction domain A"/>
    <property type="match status" value="1"/>
</dbReference>
<dbReference type="Gene3D" id="1.20.1110.10">
    <property type="entry name" value="Calcium-transporting ATPase, transmembrane domain"/>
    <property type="match status" value="1"/>
</dbReference>
<dbReference type="Gene3D" id="3.40.50.1000">
    <property type="entry name" value="HAD superfamily/HAD-like"/>
    <property type="match status" value="1"/>
</dbReference>
<dbReference type="InterPro" id="IPR023299">
    <property type="entry name" value="ATPase_P-typ_cyto_dom_N"/>
</dbReference>
<dbReference type="InterPro" id="IPR018303">
    <property type="entry name" value="ATPase_P-typ_P_site"/>
</dbReference>
<dbReference type="InterPro" id="IPR023298">
    <property type="entry name" value="ATPase_P-typ_TM_dom_sf"/>
</dbReference>
<dbReference type="InterPro" id="IPR008250">
    <property type="entry name" value="ATPase_P-typ_transduc_dom_A_sf"/>
</dbReference>
<dbReference type="InterPro" id="IPR051014">
    <property type="entry name" value="Cation_Transport_ATPase_IB"/>
</dbReference>
<dbReference type="InterPro" id="IPR036412">
    <property type="entry name" value="HAD-like_sf"/>
</dbReference>
<dbReference type="InterPro" id="IPR023214">
    <property type="entry name" value="HAD_sf"/>
</dbReference>
<dbReference type="InterPro" id="IPR017969">
    <property type="entry name" value="Heavy-metal-associated_CS"/>
</dbReference>
<dbReference type="InterPro" id="IPR006121">
    <property type="entry name" value="HMA_dom"/>
</dbReference>
<dbReference type="InterPro" id="IPR036163">
    <property type="entry name" value="HMA_dom_sf"/>
</dbReference>
<dbReference type="InterPro" id="IPR027256">
    <property type="entry name" value="P-typ_ATPase_IB"/>
</dbReference>
<dbReference type="InterPro" id="IPR001757">
    <property type="entry name" value="P_typ_ATPase"/>
</dbReference>
<dbReference type="InterPro" id="IPR044492">
    <property type="entry name" value="P_typ_ATPase_HD_dom"/>
</dbReference>
<dbReference type="NCBIfam" id="TIGR01512">
    <property type="entry name" value="ATPase-IB2_Cd"/>
    <property type="match status" value="1"/>
</dbReference>
<dbReference type="NCBIfam" id="TIGR01525">
    <property type="entry name" value="ATPase-IB_hvy"/>
    <property type="match status" value="1"/>
</dbReference>
<dbReference type="NCBIfam" id="TIGR01494">
    <property type="entry name" value="ATPase_P-type"/>
    <property type="match status" value="1"/>
</dbReference>
<dbReference type="NCBIfam" id="NF033775">
    <property type="entry name" value="P_type_ZntA"/>
    <property type="match status" value="1"/>
</dbReference>
<dbReference type="NCBIfam" id="NF008262">
    <property type="entry name" value="PRK11033.1"/>
    <property type="match status" value="1"/>
</dbReference>
<dbReference type="PANTHER" id="PTHR48085">
    <property type="entry name" value="CADMIUM/ZINC-TRANSPORTING ATPASE HMA2-RELATED"/>
    <property type="match status" value="1"/>
</dbReference>
<dbReference type="PANTHER" id="PTHR48085:SF5">
    <property type="entry name" value="CADMIUM_ZINC-TRANSPORTING ATPASE HMA4-RELATED"/>
    <property type="match status" value="1"/>
</dbReference>
<dbReference type="Pfam" id="PF00122">
    <property type="entry name" value="E1-E2_ATPase"/>
    <property type="match status" value="1"/>
</dbReference>
<dbReference type="Pfam" id="PF00403">
    <property type="entry name" value="HMA"/>
    <property type="match status" value="1"/>
</dbReference>
<dbReference type="Pfam" id="PF00702">
    <property type="entry name" value="Hydrolase"/>
    <property type="match status" value="1"/>
</dbReference>
<dbReference type="PRINTS" id="PR00119">
    <property type="entry name" value="CATATPASE"/>
</dbReference>
<dbReference type="PRINTS" id="PR00120">
    <property type="entry name" value="HATPASE"/>
</dbReference>
<dbReference type="SFLD" id="SFLDS00003">
    <property type="entry name" value="Haloacid_Dehalogenase"/>
    <property type="match status" value="1"/>
</dbReference>
<dbReference type="SFLD" id="SFLDF00027">
    <property type="entry name" value="p-type_atpase"/>
    <property type="match status" value="1"/>
</dbReference>
<dbReference type="SUPFAM" id="SSF81653">
    <property type="entry name" value="Calcium ATPase, transduction domain A"/>
    <property type="match status" value="1"/>
</dbReference>
<dbReference type="SUPFAM" id="SSF81665">
    <property type="entry name" value="Calcium ATPase, transmembrane domain M"/>
    <property type="match status" value="1"/>
</dbReference>
<dbReference type="SUPFAM" id="SSF56784">
    <property type="entry name" value="HAD-like"/>
    <property type="match status" value="1"/>
</dbReference>
<dbReference type="SUPFAM" id="SSF55008">
    <property type="entry name" value="HMA, heavy metal-associated domain"/>
    <property type="match status" value="1"/>
</dbReference>
<dbReference type="PROSITE" id="PS00154">
    <property type="entry name" value="ATPASE_E1_E2"/>
    <property type="match status" value="1"/>
</dbReference>
<dbReference type="PROSITE" id="PS01047">
    <property type="entry name" value="HMA_1"/>
    <property type="match status" value="1"/>
</dbReference>
<dbReference type="PROSITE" id="PS50846">
    <property type="entry name" value="HMA_2"/>
    <property type="match status" value="1"/>
</dbReference>
<protein>
    <recommendedName>
        <fullName evidence="16">Zinc/cadmium/lead-transporting P-type ATPase</fullName>
        <ecNumber evidence="4 9">7.2.2.-</ecNumber>
        <ecNumber evidence="4 9 11">7.2.2.12</ecNumber>
        <ecNumber evidence="4 9 11">7.2.2.21</ecNumber>
    </recommendedName>
    <alternativeName>
        <fullName evidence="13">Pb(II)/Cd(II)/Zn(II)-translocating ATPase</fullName>
    </alternativeName>
    <alternativeName>
        <fullName evidence="16">Zn(2+)/Cd(2+)/Pb(2+) export ATPase</fullName>
    </alternativeName>
</protein>
<reference key="1">
    <citation type="journal article" date="1994" name="Nucleic Acids Res.">
        <title>Analysis of the Escherichia coli genome. V. DNA sequence of the region from 76.0 to 81.5 minutes.</title>
        <authorList>
            <person name="Sofia H.J."/>
            <person name="Burland V."/>
            <person name="Daniels D.L."/>
            <person name="Plunkett G. III"/>
            <person name="Blattner F.R."/>
        </authorList>
    </citation>
    <scope>NUCLEOTIDE SEQUENCE [LARGE SCALE GENOMIC DNA]</scope>
    <source>
        <strain>K12 / MG1655 / ATCC 47076</strain>
    </source>
</reference>
<reference key="2">
    <citation type="journal article" date="1997" name="Science">
        <title>The complete genome sequence of Escherichia coli K-12.</title>
        <authorList>
            <person name="Blattner F.R."/>
            <person name="Plunkett G. III"/>
            <person name="Bloch C.A."/>
            <person name="Perna N.T."/>
            <person name="Burland V."/>
            <person name="Riley M."/>
            <person name="Collado-Vides J."/>
            <person name="Glasner J.D."/>
            <person name="Rode C.K."/>
            <person name="Mayhew G.F."/>
            <person name="Gregor J."/>
            <person name="Davis N.W."/>
            <person name="Kirkpatrick H.A."/>
            <person name="Goeden M.A."/>
            <person name="Rose D.J."/>
            <person name="Mau B."/>
            <person name="Shao Y."/>
        </authorList>
    </citation>
    <scope>NUCLEOTIDE SEQUENCE [LARGE SCALE GENOMIC DNA]</scope>
    <source>
        <strain>K12 / MG1655 / ATCC 47076</strain>
    </source>
</reference>
<reference key="3">
    <citation type="journal article" date="2006" name="Mol. Syst. Biol.">
        <title>Highly accurate genome sequences of Escherichia coli K-12 strains MG1655 and W3110.</title>
        <authorList>
            <person name="Hayashi K."/>
            <person name="Morooka N."/>
            <person name="Yamamoto Y."/>
            <person name="Fujita K."/>
            <person name="Isono K."/>
            <person name="Choi S."/>
            <person name="Ohtsubo E."/>
            <person name="Baba T."/>
            <person name="Wanner B.L."/>
            <person name="Mori H."/>
            <person name="Horiuchi T."/>
        </authorList>
    </citation>
    <scope>NUCLEOTIDE SEQUENCE [LARGE SCALE GENOMIC DNA]</scope>
    <source>
        <strain>K12 / W3110 / ATCC 27325 / DSM 5911</strain>
    </source>
</reference>
<reference key="4">
    <citation type="journal article" date="1997" name="Proc. Natl. Acad. Sci. U.S.A.">
        <title>The zntA gene of Escherichia coli encodes a Zn(II)-translocating P-type ATPase.</title>
        <authorList>
            <person name="Rensing C."/>
            <person name="Mitra B."/>
            <person name="Rosen B.P."/>
        </authorList>
    </citation>
    <scope>FUNCTION</scope>
    <scope>CATALYTIC ACTIVITY</scope>
    <scope>ACTIVITY REGULATION</scope>
    <scope>INDUCTION</scope>
    <scope>DISRUPTION PHENOTYPE</scope>
    <source>
        <strain>K12 / W3110 / ATCC 27325 / DSM 5911</strain>
    </source>
</reference>
<reference key="5">
    <citation type="journal article" date="1997" name="Mol. Microbiol.">
        <title>Zinc(II) tolerance in Escherichia coli K-12: evidence that the zntA gene (o732) encodes a cation transport ATPase.</title>
        <authorList>
            <person name="Beard S.J."/>
            <person name="Hashim R."/>
            <person name="Membrillo-Hernandez J."/>
            <person name="Hughes M.N."/>
            <person name="Poole R.K."/>
        </authorList>
    </citation>
    <scope>FUNCTION</scope>
    <scope>DISRUPTION PHENOTYPE</scope>
    <source>
        <strain>K12 / MG1655 / ATCC 47076</strain>
    </source>
</reference>
<reference key="6">
    <citation type="journal article" date="1998" name="J. Biol. Chem.">
        <title>Pb(II)-translocating P-type ATPases.</title>
        <authorList>
            <person name="Rensing C."/>
            <person name="Sun Y."/>
            <person name="Mitra B."/>
            <person name="Rosen B.P."/>
        </authorList>
    </citation>
    <scope>FUNCTION IN PB(2+) RESISTANCE</scope>
    <scope>DISRUPTION PHENOTYPE</scope>
</reference>
<reference key="7">
    <citation type="journal article" date="2000" name="J. Biol. Chem.">
        <title>The ATP hydrolytic activity of purified ZntA, a Pb(II)/Cd(II)/Zn(II)-translocating ATPase from Escherichia coli.</title>
        <authorList>
            <person name="Sharma R."/>
            <person name="Rensing C."/>
            <person name="Rosen B.P."/>
            <person name="Mitra B."/>
        </authorList>
    </citation>
    <scope>FUNCTION</scope>
    <scope>CATALYTIC ACTIVITY</scope>
    <scope>BIOPHYSICOCHEMICAL PROPERTIES</scope>
    <scope>SUBCELLULAR LOCATION</scope>
</reference>
<reference key="8">
    <citation type="journal article" date="2005" name="Science">
        <title>Global topology analysis of the Escherichia coli inner membrane proteome.</title>
        <authorList>
            <person name="Daley D.O."/>
            <person name="Rapp M."/>
            <person name="Granseth E."/>
            <person name="Melen K."/>
            <person name="Drew D."/>
            <person name="von Heijne G."/>
        </authorList>
    </citation>
    <scope>TOPOLOGY [LARGE SCALE ANALYSIS]</scope>
    <scope>SUBCELLULAR LOCATION</scope>
    <source>
        <strain>K12 / MG1655 / ATCC 47076</strain>
    </source>
</reference>
<reference key="9">
    <citation type="journal article" date="2006" name="Biochemistry">
        <title>Metal-binding affinity of the transmembrane site in ZntA: implications for metal selectivity.</title>
        <authorList>
            <person name="Liu J."/>
            <person name="Dutta S.J."/>
            <person name="Stemmler A.J."/>
            <person name="Mitra B."/>
        </authorList>
    </citation>
    <scope>SUBCELLULAR LOCATION</scope>
    <scope>DOMAIN</scope>
    <scope>METAL-BINDING SITES</scope>
    <scope>MUTAGENESIS OF 59-CYS--CYS-62 AND 392-CYS--CYS-394</scope>
</reference>
<reference key="10">
    <citation type="journal article" date="2006" name="Biochim. Biophys. Acta">
        <title>The metal-binding sites of the zinc-transporting P-type ATPase of Escherichia coli. Lys693 and Asp714 in the seventh and eighth transmembrane segments of ZntA contribute to the coupling of metal binding and ATPase activity.</title>
        <authorList>
            <person name="Okkeri J."/>
            <person name="Haltia T."/>
        </authorList>
    </citation>
    <scope>SUBCELLULAR LOCATION</scope>
    <scope>DOMAIN</scope>
    <scope>METAL-BINDING SITES</scope>
    <scope>MUTAGENESIS OF 59-CYS--CYS-62; 392-CYS--CYS-394; LYS-693 AND ASP-714</scope>
</reference>
<reference key="11">
    <citation type="journal article" date="2007" name="Biochemistry">
        <title>Conservative and nonconservative mutations of the transmembrane CPC motif in ZntA: effect on metal selectivity and activity.</title>
        <authorList>
            <person name="Dutta S.J."/>
            <person name="Liu J."/>
            <person name="Stemmler A.J."/>
            <person name="Mitra B."/>
        </authorList>
    </citation>
    <scope>FUNCTION</scope>
    <scope>CATALYTIC ACTIVITY</scope>
    <scope>BIOPHYSICOCHEMICAL PROPERTIES</scope>
    <scope>DOMAIN</scope>
    <scope>METAL-BINDING SITES</scope>
    <scope>MUTAGENESIS OF CYS-392; PRO-393 AND CYS-394</scope>
</reference>
<reference key="12">
    <citation type="journal article" date="2012" name="Biochim. Biophys. Acta">
        <title>A tetrahedral coordination of zinc during transmembrane transport by P-type Zn(2+)-ATPases.</title>
        <authorList>
            <person name="Raimunda D."/>
            <person name="Subramanian P."/>
            <person name="Stemmler T."/>
            <person name="Argueello J.M."/>
        </authorList>
    </citation>
    <scope>METAL-BINDING SITES</scope>
</reference>
<reference evidence="21 22" key="13">
    <citation type="journal article" date="2002" name="J. Mol. Biol.">
        <title>A new zinc-protein coordination site in intracellular metal trafficking: solution structure of the Apo and Zn(II) forms of ZntA(46-118).</title>
        <authorList>
            <person name="Banci L."/>
            <person name="Bertini I."/>
            <person name="Ciofi-Baffoni S."/>
            <person name="Finney L.A."/>
            <person name="Outten C.E."/>
            <person name="O'Halloran T.V."/>
        </authorList>
    </citation>
    <scope>STRUCTURE BY NMR OF 46-118 IN APO AND ZINC-BOUND FORMS</scope>
</reference>
<sequence length="732" mass="76840">MSTPDNHGKKAPQFAAFKPLTTVQNANDCCCDGACSSTPTLSENVSGTRYSWKVSGMDCAACARKVENAVRQLAGVNQVQVLFATEKLVVDADNDIRAQVESALQKAGYSLRDEQAAEEPQASRLKENLPLITLIVMMAISWGLEQFNHPFGQLAFIATTLVGLYPIARQALRLIKSGSYFAIETLMSVAAIGALFIGATAEAAMVLLLFLIGERLEGWAASRARQGVSALMALKPETATRLRKGEREEVAINSLRPGDVIEVAAGGRLPADGKLLSPFASFDESALTGESIPVERATGDKVPAGATSVDRLVTLEVLSEPGASAIDRILKLIEEAEERRAPIERFIDRFSRIYTPAIMAVALLVTLVPPLLFAASWQEWIYKGLTLLLIGCPCALVISTPAAITSGLAAAARRGALIKGGAALEQLGRVTQVAFDKTGTLTVGKPRVTAIHPATGISESELLTLAAAVEQGATHPLAQAIVREAQVAELAIPTAESQRALVGSGIEAQVNGERVLICAAGKHPADAFTGLINELESAGQTVVLVVRNDDVLGVIALQDTLRADAATAISELNALGVKGVILTGDNPRAAAAIAGELGLEFKAGLLPEDKVKAVTELNQHAPLAMVGDGINDAPAMKAAAIGIAMGSGTDVALETADAALTHNHLRGLVQMIELARATHANIRQNITIALGLKGIFLVTTLLGMTGLWLAVLADTGATVLVTANALRLLRRR</sequence>
<evidence type="ECO:0000250" key="1">
    <source>
        <dbReference type="UniProtKB" id="Q3YW59"/>
    </source>
</evidence>
<evidence type="ECO:0000255" key="2"/>
<evidence type="ECO:0000255" key="3">
    <source>
        <dbReference type="PROSITE-ProRule" id="PRU00280"/>
    </source>
</evidence>
<evidence type="ECO:0000269" key="4">
    <source>
    </source>
</evidence>
<evidence type="ECO:0000269" key="5">
    <source>
    </source>
</evidence>
<evidence type="ECO:0000269" key="6">
    <source>
    </source>
</evidence>
<evidence type="ECO:0000269" key="7">
    <source>
    </source>
</evidence>
<evidence type="ECO:0000269" key="8">
    <source>
    </source>
</evidence>
<evidence type="ECO:0000269" key="9">
    <source>
    </source>
</evidence>
<evidence type="ECO:0000269" key="10">
    <source>
    </source>
</evidence>
<evidence type="ECO:0000269" key="11">
    <source>
    </source>
</evidence>
<evidence type="ECO:0000269" key="12">
    <source>
    </source>
</evidence>
<evidence type="ECO:0000303" key="13">
    <source>
    </source>
</evidence>
<evidence type="ECO:0000303" key="14">
    <source>
    </source>
</evidence>
<evidence type="ECO:0000303" key="15">
    <source>
    </source>
</evidence>
<evidence type="ECO:0000305" key="16"/>
<evidence type="ECO:0000305" key="17">
    <source>
    </source>
</evidence>
<evidence type="ECO:0000305" key="18">
    <source>
    </source>
</evidence>
<evidence type="ECO:0000305" key="19">
    <source>
    </source>
</evidence>
<evidence type="ECO:0000305" key="20">
    <source>
    </source>
</evidence>
<evidence type="ECO:0007744" key="21">
    <source>
        <dbReference type="PDB" id="1MWY"/>
    </source>
</evidence>
<evidence type="ECO:0007744" key="22">
    <source>
        <dbReference type="PDB" id="1MWZ"/>
    </source>
</evidence>
<evidence type="ECO:0007829" key="23">
    <source>
        <dbReference type="PDB" id="1MWY"/>
    </source>
</evidence>
<accession>P37617</accession>
<accession>Q2M7D2</accession>
<name>ZNTA_ECOLI</name>
<organism>
    <name type="scientific">Escherichia coli (strain K12)</name>
    <dbReference type="NCBI Taxonomy" id="83333"/>
    <lineage>
        <taxon>Bacteria</taxon>
        <taxon>Pseudomonadati</taxon>
        <taxon>Pseudomonadota</taxon>
        <taxon>Gammaproteobacteria</taxon>
        <taxon>Enterobacterales</taxon>
        <taxon>Enterobacteriaceae</taxon>
        <taxon>Escherichia</taxon>
    </lineage>
</organism>
<gene>
    <name evidence="14 15" type="primary">zntA</name>
    <name type="synonym">yhhO</name>
    <name type="ordered locus">b3469</name>
    <name type="ordered locus">JW3434</name>
</gene>